<comment type="function">
    <text evidence="1">Catalyzes the hydrolysis of the adenine ring of phosphoribosyl-AMP.</text>
</comment>
<comment type="catalytic activity">
    <reaction evidence="1">
        <text>1-(5-phospho-beta-D-ribosyl)-5'-AMP + H2O = 1-(5-phospho-beta-D-ribosyl)-5-[(5-phospho-beta-D-ribosylamino)methylideneamino]imidazole-4-carboxamide</text>
        <dbReference type="Rhea" id="RHEA:20049"/>
        <dbReference type="ChEBI" id="CHEBI:15377"/>
        <dbReference type="ChEBI" id="CHEBI:58435"/>
        <dbReference type="ChEBI" id="CHEBI:59457"/>
        <dbReference type="EC" id="3.5.4.19"/>
    </reaction>
</comment>
<comment type="cofactor">
    <cofactor evidence="1">
        <name>Mg(2+)</name>
        <dbReference type="ChEBI" id="CHEBI:18420"/>
    </cofactor>
    <text evidence="1">Binds 1 Mg(2+) ion per subunit.</text>
</comment>
<comment type="cofactor">
    <cofactor evidence="1">
        <name>Zn(2+)</name>
        <dbReference type="ChEBI" id="CHEBI:29105"/>
    </cofactor>
    <text evidence="1">Binds 1 zinc ion per subunit.</text>
</comment>
<comment type="pathway">
    <text evidence="1">Amino-acid biosynthesis; L-histidine biosynthesis; L-histidine from 5-phospho-alpha-D-ribose 1-diphosphate: step 3/9.</text>
</comment>
<comment type="subunit">
    <text evidence="1">Homodimer.</text>
</comment>
<comment type="subcellular location">
    <subcellularLocation>
        <location evidence="1">Cytoplasm</location>
    </subcellularLocation>
</comment>
<comment type="similarity">
    <text evidence="1">Belongs to the PRA-CH family.</text>
</comment>
<reference key="1">
    <citation type="journal article" date="2009" name="J. Bacteriol.">
        <title>Genome sequence of Azotobacter vinelandii, an obligate aerobe specialized to support diverse anaerobic metabolic processes.</title>
        <authorList>
            <person name="Setubal J.C."/>
            <person name="Dos Santos P."/>
            <person name="Goldman B.S."/>
            <person name="Ertesvaag H."/>
            <person name="Espin G."/>
            <person name="Rubio L.M."/>
            <person name="Valla S."/>
            <person name="Almeida N.F."/>
            <person name="Balasubramanian D."/>
            <person name="Cromes L."/>
            <person name="Curatti L."/>
            <person name="Du Z."/>
            <person name="Godsy E."/>
            <person name="Goodner B."/>
            <person name="Hellner-Burris K."/>
            <person name="Hernandez J.A."/>
            <person name="Houmiel K."/>
            <person name="Imperial J."/>
            <person name="Kennedy C."/>
            <person name="Larson T.J."/>
            <person name="Latreille P."/>
            <person name="Ligon L.S."/>
            <person name="Lu J."/>
            <person name="Maerk M."/>
            <person name="Miller N.M."/>
            <person name="Norton S."/>
            <person name="O'Carroll I.P."/>
            <person name="Paulsen I."/>
            <person name="Raulfs E.C."/>
            <person name="Roemer R."/>
            <person name="Rosser J."/>
            <person name="Segura D."/>
            <person name="Slater S."/>
            <person name="Stricklin S.L."/>
            <person name="Studholme D.J."/>
            <person name="Sun J."/>
            <person name="Viana C.J."/>
            <person name="Wallin E."/>
            <person name="Wang B."/>
            <person name="Wheeler C."/>
            <person name="Zhu H."/>
            <person name="Dean D.R."/>
            <person name="Dixon R."/>
            <person name="Wood D."/>
        </authorList>
    </citation>
    <scope>NUCLEOTIDE SEQUENCE [LARGE SCALE GENOMIC DNA]</scope>
    <source>
        <strain>DJ / ATCC BAA-1303</strain>
    </source>
</reference>
<gene>
    <name evidence="1" type="primary">hisI</name>
    <name type="ordered locus">Avin_45440</name>
</gene>
<feature type="chain" id="PRO_1000213298" description="Phosphoribosyl-AMP cyclohydrolase">
    <location>
        <begin position="1"/>
        <end position="133"/>
    </location>
</feature>
<feature type="binding site" evidence="1">
    <location>
        <position position="77"/>
    </location>
    <ligand>
        <name>Mg(2+)</name>
        <dbReference type="ChEBI" id="CHEBI:18420"/>
    </ligand>
</feature>
<feature type="binding site" evidence="1">
    <location>
        <position position="78"/>
    </location>
    <ligand>
        <name>Zn(2+)</name>
        <dbReference type="ChEBI" id="CHEBI:29105"/>
        <note>ligand shared between dimeric partners</note>
    </ligand>
</feature>
<feature type="binding site" evidence="1">
    <location>
        <position position="79"/>
    </location>
    <ligand>
        <name>Mg(2+)</name>
        <dbReference type="ChEBI" id="CHEBI:18420"/>
    </ligand>
</feature>
<feature type="binding site" evidence="1">
    <location>
        <position position="81"/>
    </location>
    <ligand>
        <name>Mg(2+)</name>
        <dbReference type="ChEBI" id="CHEBI:18420"/>
    </ligand>
</feature>
<feature type="binding site" evidence="1">
    <location>
        <position position="95"/>
    </location>
    <ligand>
        <name>Zn(2+)</name>
        <dbReference type="ChEBI" id="CHEBI:29105"/>
        <note>ligand shared between dimeric partners</note>
    </ligand>
</feature>
<feature type="binding site" evidence="1">
    <location>
        <position position="102"/>
    </location>
    <ligand>
        <name>Zn(2+)</name>
        <dbReference type="ChEBI" id="CHEBI:29105"/>
        <note>ligand shared between dimeric partners</note>
    </ligand>
</feature>
<evidence type="ECO:0000255" key="1">
    <source>
        <dbReference type="HAMAP-Rule" id="MF_01021"/>
    </source>
</evidence>
<dbReference type="EC" id="3.5.4.19" evidence="1"/>
<dbReference type="EMBL" id="CP001157">
    <property type="protein sequence ID" value="ACO80658.1"/>
    <property type="molecule type" value="Genomic_DNA"/>
</dbReference>
<dbReference type="RefSeq" id="WP_012703025.1">
    <property type="nucleotide sequence ID" value="NC_012560.1"/>
</dbReference>
<dbReference type="SMR" id="C1DHS5"/>
<dbReference type="STRING" id="322710.Avin_45440"/>
<dbReference type="EnsemblBacteria" id="ACO80658">
    <property type="protein sequence ID" value="ACO80658"/>
    <property type="gene ID" value="Avin_45440"/>
</dbReference>
<dbReference type="GeneID" id="88187428"/>
<dbReference type="KEGG" id="avn:Avin_45440"/>
<dbReference type="eggNOG" id="COG0139">
    <property type="taxonomic scope" value="Bacteria"/>
</dbReference>
<dbReference type="HOGENOM" id="CLU_048577_5_0_6"/>
<dbReference type="OrthoDB" id="9795769at2"/>
<dbReference type="UniPathway" id="UPA00031">
    <property type="reaction ID" value="UER00008"/>
</dbReference>
<dbReference type="Proteomes" id="UP000002424">
    <property type="component" value="Chromosome"/>
</dbReference>
<dbReference type="GO" id="GO:0005737">
    <property type="term" value="C:cytoplasm"/>
    <property type="evidence" value="ECO:0007669"/>
    <property type="project" value="UniProtKB-SubCell"/>
</dbReference>
<dbReference type="GO" id="GO:0000287">
    <property type="term" value="F:magnesium ion binding"/>
    <property type="evidence" value="ECO:0007669"/>
    <property type="project" value="UniProtKB-UniRule"/>
</dbReference>
<dbReference type="GO" id="GO:0004635">
    <property type="term" value="F:phosphoribosyl-AMP cyclohydrolase activity"/>
    <property type="evidence" value="ECO:0007669"/>
    <property type="project" value="UniProtKB-UniRule"/>
</dbReference>
<dbReference type="GO" id="GO:0008270">
    <property type="term" value="F:zinc ion binding"/>
    <property type="evidence" value="ECO:0007669"/>
    <property type="project" value="UniProtKB-UniRule"/>
</dbReference>
<dbReference type="GO" id="GO:0000105">
    <property type="term" value="P:L-histidine biosynthetic process"/>
    <property type="evidence" value="ECO:0007669"/>
    <property type="project" value="UniProtKB-UniRule"/>
</dbReference>
<dbReference type="FunFam" id="3.10.20.810:FF:000001">
    <property type="entry name" value="Histidine biosynthesis bifunctional protein HisIE"/>
    <property type="match status" value="1"/>
</dbReference>
<dbReference type="Gene3D" id="3.10.20.810">
    <property type="entry name" value="Phosphoribosyl-AMP cyclohydrolase"/>
    <property type="match status" value="1"/>
</dbReference>
<dbReference type="HAMAP" id="MF_01021">
    <property type="entry name" value="HisI"/>
    <property type="match status" value="1"/>
</dbReference>
<dbReference type="InterPro" id="IPR026660">
    <property type="entry name" value="PRA-CH"/>
</dbReference>
<dbReference type="InterPro" id="IPR002496">
    <property type="entry name" value="PRib_AMP_CycHydrolase_dom"/>
</dbReference>
<dbReference type="InterPro" id="IPR038019">
    <property type="entry name" value="PRib_AMP_CycHydrolase_sf"/>
</dbReference>
<dbReference type="NCBIfam" id="NF000768">
    <property type="entry name" value="PRK00051.1"/>
    <property type="match status" value="1"/>
</dbReference>
<dbReference type="PANTHER" id="PTHR42945">
    <property type="entry name" value="HISTIDINE BIOSYNTHESIS BIFUNCTIONAL PROTEIN"/>
    <property type="match status" value="1"/>
</dbReference>
<dbReference type="PANTHER" id="PTHR42945:SF1">
    <property type="entry name" value="HISTIDINE BIOSYNTHESIS BIFUNCTIONAL PROTEIN HIS7"/>
    <property type="match status" value="1"/>
</dbReference>
<dbReference type="Pfam" id="PF01502">
    <property type="entry name" value="PRA-CH"/>
    <property type="match status" value="1"/>
</dbReference>
<dbReference type="SUPFAM" id="SSF141734">
    <property type="entry name" value="HisI-like"/>
    <property type="match status" value="1"/>
</dbReference>
<sequence length="133" mass="15404">MKDWLDEIHWNADGLVPAIAQDHRTGRILMMAWMNRESLALTVRENRAIYWSRSRGKLWRKGEESGHVQKVHELRLDCDADVIILQVEQLGGIACHTGRESCFYRVFEDGAWKVVDPILKDPDAIYRAGHPHE</sequence>
<protein>
    <recommendedName>
        <fullName evidence="1">Phosphoribosyl-AMP cyclohydrolase</fullName>
        <shortName evidence="1">PRA-CH</shortName>
        <ecNumber evidence="1">3.5.4.19</ecNumber>
    </recommendedName>
</protein>
<accession>C1DHS5</accession>
<name>HIS3_AZOVD</name>
<proteinExistence type="inferred from homology"/>
<organism>
    <name type="scientific">Azotobacter vinelandii (strain DJ / ATCC BAA-1303)</name>
    <dbReference type="NCBI Taxonomy" id="322710"/>
    <lineage>
        <taxon>Bacteria</taxon>
        <taxon>Pseudomonadati</taxon>
        <taxon>Pseudomonadota</taxon>
        <taxon>Gammaproteobacteria</taxon>
        <taxon>Pseudomonadales</taxon>
        <taxon>Pseudomonadaceae</taxon>
        <taxon>Azotobacter</taxon>
    </lineage>
</organism>
<keyword id="KW-0028">Amino-acid biosynthesis</keyword>
<keyword id="KW-0963">Cytoplasm</keyword>
<keyword id="KW-0368">Histidine biosynthesis</keyword>
<keyword id="KW-0378">Hydrolase</keyword>
<keyword id="KW-0460">Magnesium</keyword>
<keyword id="KW-0479">Metal-binding</keyword>
<keyword id="KW-0862">Zinc</keyword>